<keyword id="KW-0175">Coiled coil</keyword>
<keyword id="KW-0963">Cytoplasm</keyword>
<keyword id="KW-0206">Cytoskeleton</keyword>
<keyword id="KW-0493">Microtubule</keyword>
<keyword id="KW-0539">Nucleus</keyword>
<keyword id="KW-0597">Phosphoprotein</keyword>
<keyword id="KW-1185">Reference proteome</keyword>
<gene>
    <name type="primary">MAP65-7</name>
    <name type="ordered locus">At1g14690</name>
    <name type="ORF">F10B6.8</name>
</gene>
<name>MA657_ARATH</name>
<sequence length="603" mass="69061">MLEIESPTSLCFRTNTTCNALLRELQKIWVDIGESDAEKDRMLMELEKECLEIYRRKVDEAANSKAQLHQSLVSIEAEIASLLAALGVFNSHSPMKAKEGSKSLKEKLAAVRPMLEDLRLQKDERMKQFVDIKAQIEKMSGEISGYSDQLNKTMVGSLALDEQDLTLRKLNEYQTHLRSLQKEKSDRLNKVLDYVNEVHTLCGVLGVDFGQTVSEVHPSLHRTDHEQSTNISDDTLDGLHHMIHKLKTERSVRFQKLKDVAGSLFELWNLMDTSQEERTKFASVSYVVRSSESDITEPNILSSETIEQVSAEVDCFNKLKASRMKELVMKRRTELENLCRLAHIEADTSTSLEKSTALIDSGLVDPSELLTNIELHINKIKEEAHSRKEIIDRIDRWLSACEEENWLEEYNQDETRYSAGRGGHVNLKHAERARITVNKIPSMVDNLIKKTLLWEDETRKSFLYDGVRLVSILEDYKLTRKQQEEEKRRYRDQKKMQDLLIKRRESIYGSKPSPRRSNSVRKTNGYNGDASVPPTPRRNSAGATNNDIMTTPRSYSSHRQNGYFKEVRRLSTAPLNFVAIPKEDSVSTYTSVCGSEPDSPLYN</sequence>
<feature type="chain" id="PRO_0000395478" description="65-kDa microtubule-associated protein 7">
    <location>
        <begin position="1"/>
        <end position="603"/>
    </location>
</feature>
<feature type="region of interest" description="Disordered" evidence="4">
    <location>
        <begin position="501"/>
        <end position="559"/>
    </location>
</feature>
<feature type="coiled-coil region" evidence="3">
    <location>
        <begin position="48"/>
        <end position="79"/>
    </location>
</feature>
<feature type="coiled-coil region" evidence="3">
    <location>
        <begin position="131"/>
        <end position="186"/>
    </location>
</feature>
<feature type="coiled-coil region" evidence="3">
    <location>
        <begin position="468"/>
        <end position="502"/>
    </location>
</feature>
<feature type="compositionally biased region" description="Polar residues" evidence="4">
    <location>
        <begin position="515"/>
        <end position="526"/>
    </location>
</feature>
<feature type="compositionally biased region" description="Polar residues" evidence="4">
    <location>
        <begin position="537"/>
        <end position="559"/>
    </location>
</feature>
<feature type="site" description="Microtubule binding" evidence="1">
    <location>
        <position position="419"/>
    </location>
</feature>
<feature type="site" description="Microtubule binding" evidence="1">
    <location>
        <position position="430"/>
    </location>
</feature>
<feature type="modified residue" description="Phosphoserine" evidence="2">
    <location>
        <position position="513"/>
    </location>
</feature>
<feature type="modified residue" description="Phosphoserine" evidence="2">
    <location>
        <position position="599"/>
    </location>
</feature>
<dbReference type="EMBL" id="AC006917">
    <property type="protein sequence ID" value="AAF79248.1"/>
    <property type="status" value="ALT_SEQ"/>
    <property type="molecule type" value="Genomic_DNA"/>
</dbReference>
<dbReference type="EMBL" id="CP002684">
    <property type="protein sequence ID" value="AEE29208.1"/>
    <property type="molecule type" value="Genomic_DNA"/>
</dbReference>
<dbReference type="EMBL" id="CP002684">
    <property type="protein sequence ID" value="AEE29209.1"/>
    <property type="molecule type" value="Genomic_DNA"/>
</dbReference>
<dbReference type="EMBL" id="AY120768">
    <property type="protein sequence ID" value="AAM53326.1"/>
    <property type="molecule type" value="mRNA"/>
</dbReference>
<dbReference type="EMBL" id="BT008373">
    <property type="protein sequence ID" value="AAP37732.1"/>
    <property type="molecule type" value="mRNA"/>
</dbReference>
<dbReference type="EMBL" id="AK176215">
    <property type="protein sequence ID" value="BAD43978.1"/>
    <property type="molecule type" value="mRNA"/>
</dbReference>
<dbReference type="EMBL" id="AK176300">
    <property type="protein sequence ID" value="BAD44063.1"/>
    <property type="molecule type" value="mRNA"/>
</dbReference>
<dbReference type="RefSeq" id="NP_001077537.1">
    <property type="nucleotide sequence ID" value="NM_001084068.3"/>
</dbReference>
<dbReference type="RefSeq" id="NP_172922.2">
    <property type="nucleotide sequence ID" value="NM_101338.4"/>
</dbReference>
<dbReference type="SMR" id="Q8L836"/>
<dbReference type="FunCoup" id="Q8L836">
    <property type="interactions" value="2833"/>
</dbReference>
<dbReference type="STRING" id="3702.Q8L836"/>
<dbReference type="GlyGen" id="Q8L836">
    <property type="glycosylation" value="1 site"/>
</dbReference>
<dbReference type="iPTMnet" id="Q8L836"/>
<dbReference type="PaxDb" id="3702-AT1G14690.1"/>
<dbReference type="ProteomicsDB" id="238871"/>
<dbReference type="EnsemblPlants" id="AT1G14690.1">
    <property type="protein sequence ID" value="AT1G14690.1"/>
    <property type="gene ID" value="AT1G14690"/>
</dbReference>
<dbReference type="EnsemblPlants" id="AT1G14690.2">
    <property type="protein sequence ID" value="AT1G14690.2"/>
    <property type="gene ID" value="AT1G14690"/>
</dbReference>
<dbReference type="GeneID" id="838034"/>
<dbReference type="Gramene" id="AT1G14690.1">
    <property type="protein sequence ID" value="AT1G14690.1"/>
    <property type="gene ID" value="AT1G14690"/>
</dbReference>
<dbReference type="Gramene" id="AT1G14690.2">
    <property type="protein sequence ID" value="AT1G14690.2"/>
    <property type="gene ID" value="AT1G14690"/>
</dbReference>
<dbReference type="KEGG" id="ath:AT1G14690"/>
<dbReference type="Araport" id="AT1G14690"/>
<dbReference type="TAIR" id="AT1G14690">
    <property type="gene designation" value="MAP65-7"/>
</dbReference>
<dbReference type="eggNOG" id="KOG4302">
    <property type="taxonomic scope" value="Eukaryota"/>
</dbReference>
<dbReference type="HOGENOM" id="CLU_011760_2_0_1"/>
<dbReference type="InParanoid" id="Q8L836"/>
<dbReference type="OMA" id="HTSSTCH"/>
<dbReference type="OrthoDB" id="642895at2759"/>
<dbReference type="PhylomeDB" id="Q8L836"/>
<dbReference type="PRO" id="PR:Q8L836"/>
<dbReference type="Proteomes" id="UP000006548">
    <property type="component" value="Chromosome 1"/>
</dbReference>
<dbReference type="ExpressionAtlas" id="Q8L836">
    <property type="expression patterns" value="baseline and differential"/>
</dbReference>
<dbReference type="GO" id="GO:0005737">
    <property type="term" value="C:cytoplasm"/>
    <property type="evidence" value="ECO:0007669"/>
    <property type="project" value="UniProtKB-SubCell"/>
</dbReference>
<dbReference type="GO" id="GO:0005874">
    <property type="term" value="C:microtubule"/>
    <property type="evidence" value="ECO:0007669"/>
    <property type="project" value="UniProtKB-KW"/>
</dbReference>
<dbReference type="GO" id="GO:0005634">
    <property type="term" value="C:nucleus"/>
    <property type="evidence" value="ECO:0007669"/>
    <property type="project" value="UniProtKB-SubCell"/>
</dbReference>
<dbReference type="GO" id="GO:0000922">
    <property type="term" value="C:spindle pole"/>
    <property type="evidence" value="ECO:0007669"/>
    <property type="project" value="UniProtKB-SubCell"/>
</dbReference>
<dbReference type="GO" id="GO:0008017">
    <property type="term" value="F:microtubule binding"/>
    <property type="evidence" value="ECO:0007669"/>
    <property type="project" value="InterPro"/>
</dbReference>
<dbReference type="GO" id="GO:0000226">
    <property type="term" value="P:microtubule cytoskeleton organization"/>
    <property type="evidence" value="ECO:0007669"/>
    <property type="project" value="InterPro"/>
</dbReference>
<dbReference type="FunFam" id="1.20.58.1520:FF:000002">
    <property type="entry name" value="65-kDa microtubule-associated protein 6"/>
    <property type="match status" value="1"/>
</dbReference>
<dbReference type="Gene3D" id="1.20.58.1520">
    <property type="match status" value="1"/>
</dbReference>
<dbReference type="InterPro" id="IPR007145">
    <property type="entry name" value="MAP65_Ase1_PRC1"/>
</dbReference>
<dbReference type="PANTHER" id="PTHR19321:SF23">
    <property type="entry name" value="65-KDA MICROTUBULE-ASSOCIATED PROTEIN 7"/>
    <property type="match status" value="1"/>
</dbReference>
<dbReference type="PANTHER" id="PTHR19321">
    <property type="entry name" value="PROTEIN REGULATOR OF CYTOKINESIS 1 PRC1-RELATED"/>
    <property type="match status" value="1"/>
</dbReference>
<dbReference type="Pfam" id="PF03999">
    <property type="entry name" value="MAP65_ASE1"/>
    <property type="match status" value="1"/>
</dbReference>
<proteinExistence type="evidence at transcript level"/>
<protein>
    <recommendedName>
        <fullName>65-kDa microtubule-associated protein 7</fullName>
        <shortName>AtMAP65-7</shortName>
    </recommendedName>
</protein>
<reference key="1">
    <citation type="journal article" date="2000" name="Nature">
        <title>Sequence and analysis of chromosome 1 of the plant Arabidopsis thaliana.</title>
        <authorList>
            <person name="Theologis A."/>
            <person name="Ecker J.R."/>
            <person name="Palm C.J."/>
            <person name="Federspiel N.A."/>
            <person name="Kaul S."/>
            <person name="White O."/>
            <person name="Alonso J."/>
            <person name="Altafi H."/>
            <person name="Araujo R."/>
            <person name="Bowman C.L."/>
            <person name="Brooks S.Y."/>
            <person name="Buehler E."/>
            <person name="Chan A."/>
            <person name="Chao Q."/>
            <person name="Chen H."/>
            <person name="Cheuk R.F."/>
            <person name="Chin C.W."/>
            <person name="Chung M.K."/>
            <person name="Conn L."/>
            <person name="Conway A.B."/>
            <person name="Conway A.R."/>
            <person name="Creasy T.H."/>
            <person name="Dewar K."/>
            <person name="Dunn P."/>
            <person name="Etgu P."/>
            <person name="Feldblyum T.V."/>
            <person name="Feng J.-D."/>
            <person name="Fong B."/>
            <person name="Fujii C.Y."/>
            <person name="Gill J.E."/>
            <person name="Goldsmith A.D."/>
            <person name="Haas B."/>
            <person name="Hansen N.F."/>
            <person name="Hughes B."/>
            <person name="Huizar L."/>
            <person name="Hunter J.L."/>
            <person name="Jenkins J."/>
            <person name="Johnson-Hopson C."/>
            <person name="Khan S."/>
            <person name="Khaykin E."/>
            <person name="Kim C.J."/>
            <person name="Koo H.L."/>
            <person name="Kremenetskaia I."/>
            <person name="Kurtz D.B."/>
            <person name="Kwan A."/>
            <person name="Lam B."/>
            <person name="Langin-Hooper S."/>
            <person name="Lee A."/>
            <person name="Lee J.M."/>
            <person name="Lenz C.A."/>
            <person name="Li J.H."/>
            <person name="Li Y.-P."/>
            <person name="Lin X."/>
            <person name="Liu S.X."/>
            <person name="Liu Z.A."/>
            <person name="Luros J.S."/>
            <person name="Maiti R."/>
            <person name="Marziali A."/>
            <person name="Militscher J."/>
            <person name="Miranda M."/>
            <person name="Nguyen M."/>
            <person name="Nierman W.C."/>
            <person name="Osborne B.I."/>
            <person name="Pai G."/>
            <person name="Peterson J."/>
            <person name="Pham P.K."/>
            <person name="Rizzo M."/>
            <person name="Rooney T."/>
            <person name="Rowley D."/>
            <person name="Sakano H."/>
            <person name="Salzberg S.L."/>
            <person name="Schwartz J.R."/>
            <person name="Shinn P."/>
            <person name="Southwick A.M."/>
            <person name="Sun H."/>
            <person name="Tallon L.J."/>
            <person name="Tambunga G."/>
            <person name="Toriumi M.J."/>
            <person name="Town C.D."/>
            <person name="Utterback T."/>
            <person name="Van Aken S."/>
            <person name="Vaysberg M."/>
            <person name="Vysotskaia V.S."/>
            <person name="Walker M."/>
            <person name="Wu D."/>
            <person name="Yu G."/>
            <person name="Fraser C.M."/>
            <person name="Venter J.C."/>
            <person name="Davis R.W."/>
        </authorList>
    </citation>
    <scope>NUCLEOTIDE SEQUENCE [LARGE SCALE GENOMIC DNA]</scope>
    <source>
        <strain>cv. Columbia</strain>
    </source>
</reference>
<reference key="2">
    <citation type="journal article" date="2017" name="Plant J.">
        <title>Araport11: a complete reannotation of the Arabidopsis thaliana reference genome.</title>
        <authorList>
            <person name="Cheng C.Y."/>
            <person name="Krishnakumar V."/>
            <person name="Chan A.P."/>
            <person name="Thibaud-Nissen F."/>
            <person name="Schobel S."/>
            <person name="Town C.D."/>
        </authorList>
    </citation>
    <scope>GENOME REANNOTATION</scope>
    <source>
        <strain>cv. Columbia</strain>
    </source>
</reference>
<reference key="3">
    <citation type="journal article" date="2003" name="Science">
        <title>Empirical analysis of transcriptional activity in the Arabidopsis genome.</title>
        <authorList>
            <person name="Yamada K."/>
            <person name="Lim J."/>
            <person name="Dale J.M."/>
            <person name="Chen H."/>
            <person name="Shinn P."/>
            <person name="Palm C.J."/>
            <person name="Southwick A.M."/>
            <person name="Wu H.C."/>
            <person name="Kim C.J."/>
            <person name="Nguyen M."/>
            <person name="Pham P.K."/>
            <person name="Cheuk R.F."/>
            <person name="Karlin-Newmann G."/>
            <person name="Liu S.X."/>
            <person name="Lam B."/>
            <person name="Sakano H."/>
            <person name="Wu T."/>
            <person name="Yu G."/>
            <person name="Miranda M."/>
            <person name="Quach H.L."/>
            <person name="Tripp M."/>
            <person name="Chang C.H."/>
            <person name="Lee J.M."/>
            <person name="Toriumi M.J."/>
            <person name="Chan M.M."/>
            <person name="Tang C.C."/>
            <person name="Onodera C.S."/>
            <person name="Deng J.M."/>
            <person name="Akiyama K."/>
            <person name="Ansari Y."/>
            <person name="Arakawa T."/>
            <person name="Banh J."/>
            <person name="Banno F."/>
            <person name="Bowser L."/>
            <person name="Brooks S.Y."/>
            <person name="Carninci P."/>
            <person name="Chao Q."/>
            <person name="Choy N."/>
            <person name="Enju A."/>
            <person name="Goldsmith A.D."/>
            <person name="Gurjal M."/>
            <person name="Hansen N.F."/>
            <person name="Hayashizaki Y."/>
            <person name="Johnson-Hopson C."/>
            <person name="Hsuan V.W."/>
            <person name="Iida K."/>
            <person name="Karnes M."/>
            <person name="Khan S."/>
            <person name="Koesema E."/>
            <person name="Ishida J."/>
            <person name="Jiang P.X."/>
            <person name="Jones T."/>
            <person name="Kawai J."/>
            <person name="Kamiya A."/>
            <person name="Meyers C."/>
            <person name="Nakajima M."/>
            <person name="Narusaka M."/>
            <person name="Seki M."/>
            <person name="Sakurai T."/>
            <person name="Satou M."/>
            <person name="Tamse R."/>
            <person name="Vaysberg M."/>
            <person name="Wallender E.K."/>
            <person name="Wong C."/>
            <person name="Yamamura Y."/>
            <person name="Yuan S."/>
            <person name="Shinozaki K."/>
            <person name="Davis R.W."/>
            <person name="Theologis A."/>
            <person name="Ecker J.R."/>
        </authorList>
    </citation>
    <scope>NUCLEOTIDE SEQUENCE [LARGE SCALE MRNA]</scope>
    <source>
        <strain>cv. Columbia</strain>
    </source>
</reference>
<reference key="4">
    <citation type="submission" date="2004-09" db="EMBL/GenBank/DDBJ databases">
        <title>Large-scale analysis of RIKEN Arabidopsis full-length (RAFL) cDNAs.</title>
        <authorList>
            <person name="Totoki Y."/>
            <person name="Seki M."/>
            <person name="Ishida J."/>
            <person name="Nakajima M."/>
            <person name="Enju A."/>
            <person name="Kamiya A."/>
            <person name="Narusaka M."/>
            <person name="Shin-i T."/>
            <person name="Nakagawa M."/>
            <person name="Sakamoto N."/>
            <person name="Oishi K."/>
            <person name="Kohara Y."/>
            <person name="Kobayashi M."/>
            <person name="Toyoda A."/>
            <person name="Sakaki Y."/>
            <person name="Sakurai T."/>
            <person name="Iida K."/>
            <person name="Akiyama K."/>
            <person name="Satou M."/>
            <person name="Toyoda T."/>
            <person name="Konagaya A."/>
            <person name="Carninci P."/>
            <person name="Kawai J."/>
            <person name="Hayashizaki Y."/>
            <person name="Shinozaki K."/>
        </authorList>
    </citation>
    <scope>NUCLEOTIDE SEQUENCE [LARGE SCALE MRNA] OF 159-603</scope>
    <source>
        <strain>cv. Columbia</strain>
    </source>
</reference>
<reference key="5">
    <citation type="journal article" date="2002" name="Plant Mol. Biol.">
        <title>The plant cytoskeleton: recent advances in the study of the plant microtubule-associated proteins MAP-65, MAP-190 and the Xenopus MAP215-like protein, MOR1.</title>
        <authorList>
            <person name="Hussey P.J."/>
            <person name="Hawkins T.J."/>
            <person name="Igarashi H."/>
            <person name="Kaloriti D."/>
            <person name="Smertenko A."/>
        </authorList>
    </citation>
    <scope>GENE FAMILY</scope>
    <scope>NOMENCLATURE</scope>
</reference>
<evidence type="ECO:0000250" key="1"/>
<evidence type="ECO:0000250" key="2">
    <source>
        <dbReference type="UniProtKB" id="Q9FLP0"/>
    </source>
</evidence>
<evidence type="ECO:0000255" key="3"/>
<evidence type="ECO:0000256" key="4">
    <source>
        <dbReference type="SAM" id="MobiDB-lite"/>
    </source>
</evidence>
<evidence type="ECO:0000305" key="5"/>
<comment type="subunit">
    <text evidence="1">Forms dimer. Binds to microtubules (MT) (By similarity).</text>
</comment>
<comment type="subcellular location">
    <subcellularLocation>
        <location evidence="1">Nucleus</location>
    </subcellularLocation>
    <subcellularLocation>
        <location evidence="1">Cytoplasm</location>
    </subcellularLocation>
    <subcellularLocation>
        <location evidence="1">Cytoplasm</location>
        <location evidence="1">Cytoskeleton</location>
        <location evidence="1">Spindle pole</location>
    </subcellularLocation>
</comment>
<comment type="similarity">
    <text evidence="5">Belongs to the MAP65/ASE1 family.</text>
</comment>
<comment type="sequence caution" evidence="5">
    <conflict type="erroneous gene model prediction">
        <sequence resource="EMBL-CDS" id="AAF79248"/>
    </conflict>
</comment>
<accession>Q8L836</accession>
<accession>Q67Z18</accession>
<accession>Q9LQW1</accession>
<organism>
    <name type="scientific">Arabidopsis thaliana</name>
    <name type="common">Mouse-ear cress</name>
    <dbReference type="NCBI Taxonomy" id="3702"/>
    <lineage>
        <taxon>Eukaryota</taxon>
        <taxon>Viridiplantae</taxon>
        <taxon>Streptophyta</taxon>
        <taxon>Embryophyta</taxon>
        <taxon>Tracheophyta</taxon>
        <taxon>Spermatophyta</taxon>
        <taxon>Magnoliopsida</taxon>
        <taxon>eudicotyledons</taxon>
        <taxon>Gunneridae</taxon>
        <taxon>Pentapetalae</taxon>
        <taxon>rosids</taxon>
        <taxon>malvids</taxon>
        <taxon>Brassicales</taxon>
        <taxon>Brassicaceae</taxon>
        <taxon>Camelineae</taxon>
        <taxon>Arabidopsis</taxon>
    </lineage>
</organism>